<comment type="catalytic activity">
    <reaction>
        <text>sn-glycerol 3-phosphate + O2 = dihydroxyacetone phosphate + H2O2</text>
        <dbReference type="Rhea" id="RHEA:18369"/>
        <dbReference type="ChEBI" id="CHEBI:15379"/>
        <dbReference type="ChEBI" id="CHEBI:16240"/>
        <dbReference type="ChEBI" id="CHEBI:57597"/>
        <dbReference type="ChEBI" id="CHEBI:57642"/>
        <dbReference type="EC" id="1.1.3.21"/>
    </reaction>
</comment>
<comment type="cofactor">
    <cofactor evidence="1">
        <name>FAD</name>
        <dbReference type="ChEBI" id="CHEBI:57692"/>
    </cofactor>
</comment>
<comment type="subcellular location">
    <subcellularLocation>
        <location evidence="1">Cytoplasm</location>
    </subcellularLocation>
</comment>
<comment type="similarity">
    <text evidence="4">Belongs to the FAD-dependent glycerol-3-phosphate dehydrogenase family.</text>
</comment>
<comment type="caution">
    <text evidence="4">As S.pyogenes is unable to produce acid from glycerol, the significance and/or function of the glpO gene in this organism is at present unknown.</text>
</comment>
<gene>
    <name type="primary">glpO</name>
    <name type="ordered locus">SpyM3_1467</name>
</gene>
<accession>P0DB20</accession>
<accession>Q8K666</accession>
<keyword id="KW-0963">Cytoplasm</keyword>
<keyword id="KW-0274">FAD</keyword>
<keyword id="KW-0285">Flavoprotein</keyword>
<keyword id="KW-0319">Glycerol metabolism</keyword>
<keyword id="KW-0560">Oxidoreductase</keyword>
<proteinExistence type="inferred from homology"/>
<feature type="chain" id="PRO_0000126111" description="Alpha-glycerophosphate oxidase">
    <location>
        <begin position="1"/>
        <end position="612"/>
    </location>
</feature>
<feature type="region of interest" description="Disordered" evidence="3">
    <location>
        <begin position="398"/>
        <end position="418"/>
    </location>
</feature>
<feature type="compositionally biased region" description="Basic and acidic residues" evidence="3">
    <location>
        <begin position="398"/>
        <end position="408"/>
    </location>
</feature>
<feature type="binding site" evidence="2">
    <location>
        <begin position="21"/>
        <end position="49"/>
    </location>
    <ligand>
        <name>FAD</name>
        <dbReference type="ChEBI" id="CHEBI:57692"/>
    </ligand>
</feature>
<name>GLPO_STRP3</name>
<sequence length="612" mass="67653">MEFSRETRRLALQKMQERDLDLLIIGGGITGAGVALQAAASGLDTGLIEMQDFAQGTSSRSTKLVHGGLRYLKQFDVEVVSDTVSERAVVQQIAPHIPKPDPMLLPVYDEPGSTFSMFRLKVAMDLYDLLAGVSNTPAANKVLTKEEVLKREPDLKQEGLLGGGVYLDFRNNDARLVIENIKRANRDGALIASHVKAEDFLLDDDGKIIGVKARDLLSDQEIIIKAKLVINTTGPWSDEIRQFSHKGQPIHQMRPTKGVHLVVDRQKLPVSQPVYVDTGLNDGRMVFVLPREEKTYFGTTDTDYTGDLEHPQVTQEDVDYLLGVVNNRFPNANVTIDDIESSWAGLRPLLSGNSASDYNGGNSGKVSDDSFDHLVDTVKAYINHEDSREAVEKAIKQVETSTSEKELDPSAVSRGSSFDRDENGLFTLAGGKITDYRKMAEGALTGIIQILKEEFGKSFKLINSKTYPVSGGEINPANVDLEIEAYAQLGTLSGLSMDDARYLANLYGSNAPKVFALTRQLTAAEGLSLAETLSLHYAMDYEMALKPTDYFLRRTNHLLFMRDSLDALIDPVINEMAKHFEWSDQERVAQEDDLRRVIADNDLSALKGHQEG</sequence>
<reference key="1">
    <citation type="journal article" date="2002" name="Proc. Natl. Acad. Sci. U.S.A.">
        <title>Genome sequence of a serotype M3 strain of group A Streptococcus: phage-encoded toxins, the high-virulence phenotype, and clone emergence.</title>
        <authorList>
            <person name="Beres S.B."/>
            <person name="Sylva G.L."/>
            <person name="Barbian K.D."/>
            <person name="Lei B."/>
            <person name="Hoff J.S."/>
            <person name="Mammarella N.D."/>
            <person name="Liu M.-Y."/>
            <person name="Smoot J.C."/>
            <person name="Porcella S.F."/>
            <person name="Parkins L.D."/>
            <person name="Campbell D.S."/>
            <person name="Smith T.M."/>
            <person name="McCormick J.K."/>
            <person name="Leung D.Y.M."/>
            <person name="Schlievert P.M."/>
            <person name="Musser J.M."/>
        </authorList>
    </citation>
    <scope>NUCLEOTIDE SEQUENCE [LARGE SCALE GENOMIC DNA]</scope>
    <source>
        <strain>ATCC BAA-595 / MGAS315</strain>
    </source>
</reference>
<evidence type="ECO:0000250" key="1"/>
<evidence type="ECO:0000255" key="2"/>
<evidence type="ECO:0000256" key="3">
    <source>
        <dbReference type="SAM" id="MobiDB-lite"/>
    </source>
</evidence>
<evidence type="ECO:0000305" key="4"/>
<organism>
    <name type="scientific">Streptococcus pyogenes serotype M3 (strain ATCC BAA-595 / MGAS315)</name>
    <dbReference type="NCBI Taxonomy" id="198466"/>
    <lineage>
        <taxon>Bacteria</taxon>
        <taxon>Bacillati</taxon>
        <taxon>Bacillota</taxon>
        <taxon>Bacilli</taxon>
        <taxon>Lactobacillales</taxon>
        <taxon>Streptococcaceae</taxon>
        <taxon>Streptococcus</taxon>
    </lineage>
</organism>
<dbReference type="EC" id="1.1.3.21"/>
<dbReference type="EMBL" id="AE014074">
    <property type="protein sequence ID" value="AAM80074.1"/>
    <property type="molecule type" value="Genomic_DNA"/>
</dbReference>
<dbReference type="RefSeq" id="WP_011054908.1">
    <property type="nucleotide sequence ID" value="NC_004070.1"/>
</dbReference>
<dbReference type="SMR" id="P0DB20"/>
<dbReference type="KEGG" id="spg:SpyM3_1467"/>
<dbReference type="HOGENOM" id="CLU_015740_5_2_9"/>
<dbReference type="Proteomes" id="UP000000564">
    <property type="component" value="Chromosome"/>
</dbReference>
<dbReference type="GO" id="GO:0005737">
    <property type="term" value="C:cytoplasm"/>
    <property type="evidence" value="ECO:0007669"/>
    <property type="project" value="UniProtKB-SubCell"/>
</dbReference>
<dbReference type="GO" id="GO:0004368">
    <property type="term" value="F:glycerol-3-phosphate dehydrogenase (quinone) activity"/>
    <property type="evidence" value="ECO:0007669"/>
    <property type="project" value="InterPro"/>
</dbReference>
<dbReference type="GO" id="GO:0004369">
    <property type="term" value="F:glycerol-3-phosphate oxidase activity"/>
    <property type="evidence" value="ECO:0007669"/>
    <property type="project" value="UniProtKB-EC"/>
</dbReference>
<dbReference type="GO" id="GO:0006071">
    <property type="term" value="P:glycerol metabolic process"/>
    <property type="evidence" value="ECO:0007669"/>
    <property type="project" value="UniProtKB-KW"/>
</dbReference>
<dbReference type="GO" id="GO:0046168">
    <property type="term" value="P:glycerol-3-phosphate catabolic process"/>
    <property type="evidence" value="ECO:0007669"/>
    <property type="project" value="TreeGrafter"/>
</dbReference>
<dbReference type="Gene3D" id="1.10.8.870">
    <property type="entry name" value="Alpha-glycerophosphate oxidase, cap domain"/>
    <property type="match status" value="1"/>
</dbReference>
<dbReference type="Gene3D" id="3.30.9.10">
    <property type="entry name" value="D-Amino Acid Oxidase, subunit A, domain 2"/>
    <property type="match status" value="1"/>
</dbReference>
<dbReference type="Gene3D" id="3.50.50.60">
    <property type="entry name" value="FAD/NAD(P)-binding domain"/>
    <property type="match status" value="1"/>
</dbReference>
<dbReference type="InterPro" id="IPR031656">
    <property type="entry name" value="DAO_C"/>
</dbReference>
<dbReference type="InterPro" id="IPR038299">
    <property type="entry name" value="DAO_C_sf"/>
</dbReference>
<dbReference type="InterPro" id="IPR006076">
    <property type="entry name" value="FAD-dep_OxRdtase"/>
</dbReference>
<dbReference type="InterPro" id="IPR036188">
    <property type="entry name" value="FAD/NAD-bd_sf"/>
</dbReference>
<dbReference type="InterPro" id="IPR000447">
    <property type="entry name" value="G3P_DH_FAD-dep"/>
</dbReference>
<dbReference type="NCBIfam" id="NF033461">
    <property type="entry name" value="glycerol3P_ox_1"/>
    <property type="match status" value="1"/>
</dbReference>
<dbReference type="PANTHER" id="PTHR11985:SF35">
    <property type="entry name" value="ANAEROBIC GLYCEROL-3-PHOSPHATE DEHYDROGENASE SUBUNIT A"/>
    <property type="match status" value="1"/>
</dbReference>
<dbReference type="PANTHER" id="PTHR11985">
    <property type="entry name" value="GLYCEROL-3-PHOSPHATE DEHYDROGENASE"/>
    <property type="match status" value="1"/>
</dbReference>
<dbReference type="Pfam" id="PF01266">
    <property type="entry name" value="DAO"/>
    <property type="match status" value="1"/>
</dbReference>
<dbReference type="Pfam" id="PF16901">
    <property type="entry name" value="DAO_C"/>
    <property type="match status" value="1"/>
</dbReference>
<dbReference type="PRINTS" id="PR01001">
    <property type="entry name" value="FADG3PDH"/>
</dbReference>
<dbReference type="SUPFAM" id="SSF54373">
    <property type="entry name" value="FAD-linked reductases, C-terminal domain"/>
    <property type="match status" value="1"/>
</dbReference>
<dbReference type="SUPFAM" id="SSF51905">
    <property type="entry name" value="FAD/NAD(P)-binding domain"/>
    <property type="match status" value="1"/>
</dbReference>
<dbReference type="PROSITE" id="PS00977">
    <property type="entry name" value="FAD_G3PDH_1"/>
    <property type="match status" value="1"/>
</dbReference>
<protein>
    <recommendedName>
        <fullName>Alpha-glycerophosphate oxidase</fullName>
        <ecNumber>1.1.3.21</ecNumber>
    </recommendedName>
    <alternativeName>
        <fullName>Glycerol-3-phosphate oxidase</fullName>
    </alternativeName>
</protein>